<proteinExistence type="uncertain"/>
<reference key="1">
    <citation type="journal article" date="1997" name="Nature">
        <title>The nucleotide sequence of Saccharomyces cerevisiae chromosome IV.</title>
        <authorList>
            <person name="Jacq C."/>
            <person name="Alt-Moerbe J."/>
            <person name="Andre B."/>
            <person name="Arnold W."/>
            <person name="Bahr A."/>
            <person name="Ballesta J.P.G."/>
            <person name="Bargues M."/>
            <person name="Baron L."/>
            <person name="Becker A."/>
            <person name="Biteau N."/>
            <person name="Bloecker H."/>
            <person name="Blugeon C."/>
            <person name="Boskovic J."/>
            <person name="Brandt P."/>
            <person name="Brueckner M."/>
            <person name="Buitrago M.J."/>
            <person name="Coster F."/>
            <person name="Delaveau T."/>
            <person name="del Rey F."/>
            <person name="Dujon B."/>
            <person name="Eide L.G."/>
            <person name="Garcia-Cantalejo J.M."/>
            <person name="Goffeau A."/>
            <person name="Gomez-Peris A."/>
            <person name="Granotier C."/>
            <person name="Hanemann V."/>
            <person name="Hankeln T."/>
            <person name="Hoheisel J.D."/>
            <person name="Jaeger W."/>
            <person name="Jimenez A."/>
            <person name="Jonniaux J.-L."/>
            <person name="Kraemer C."/>
            <person name="Kuester H."/>
            <person name="Laamanen P."/>
            <person name="Legros Y."/>
            <person name="Louis E.J."/>
            <person name="Moeller-Rieker S."/>
            <person name="Monnet A."/>
            <person name="Moro M."/>
            <person name="Mueller-Auer S."/>
            <person name="Nussbaumer B."/>
            <person name="Paricio N."/>
            <person name="Paulin L."/>
            <person name="Perea J."/>
            <person name="Perez-Alonso M."/>
            <person name="Perez-Ortin J.E."/>
            <person name="Pohl T.M."/>
            <person name="Prydz H."/>
            <person name="Purnelle B."/>
            <person name="Rasmussen S.W."/>
            <person name="Remacha M.A."/>
            <person name="Revuelta J.L."/>
            <person name="Rieger M."/>
            <person name="Salom D."/>
            <person name="Saluz H.P."/>
            <person name="Saiz J.E."/>
            <person name="Saren A.-M."/>
            <person name="Schaefer M."/>
            <person name="Scharfe M."/>
            <person name="Schmidt E.R."/>
            <person name="Schneider C."/>
            <person name="Scholler P."/>
            <person name="Schwarz S."/>
            <person name="Soler-Mira A."/>
            <person name="Urrestarazu L.A."/>
            <person name="Verhasselt P."/>
            <person name="Vissers S."/>
            <person name="Voet M."/>
            <person name="Volckaert G."/>
            <person name="Wagner G."/>
            <person name="Wambutt R."/>
            <person name="Wedler E."/>
            <person name="Wedler H."/>
            <person name="Woelfl S."/>
            <person name="Harris D.E."/>
            <person name="Bowman S."/>
            <person name="Brown D."/>
            <person name="Churcher C.M."/>
            <person name="Connor R."/>
            <person name="Dedman K."/>
            <person name="Gentles S."/>
            <person name="Hamlin N."/>
            <person name="Hunt S."/>
            <person name="Jones L."/>
            <person name="McDonald S."/>
            <person name="Murphy L.D."/>
            <person name="Niblett D."/>
            <person name="Odell C."/>
            <person name="Oliver K."/>
            <person name="Rajandream M.A."/>
            <person name="Richards C."/>
            <person name="Shore L."/>
            <person name="Walsh S.V."/>
            <person name="Barrell B.G."/>
            <person name="Dietrich F.S."/>
            <person name="Mulligan J.T."/>
            <person name="Allen E."/>
            <person name="Araujo R."/>
            <person name="Aviles E."/>
            <person name="Berno A."/>
            <person name="Carpenter J."/>
            <person name="Chen E."/>
            <person name="Cherry J.M."/>
            <person name="Chung E."/>
            <person name="Duncan M."/>
            <person name="Hunicke-Smith S."/>
            <person name="Hyman R.W."/>
            <person name="Komp C."/>
            <person name="Lashkari D."/>
            <person name="Lew H."/>
            <person name="Lin D."/>
            <person name="Mosedale D."/>
            <person name="Nakahara K."/>
            <person name="Namath A."/>
            <person name="Oefner P."/>
            <person name="Oh C."/>
            <person name="Petel F.X."/>
            <person name="Roberts D."/>
            <person name="Schramm S."/>
            <person name="Schroeder M."/>
            <person name="Shogren T."/>
            <person name="Shroff N."/>
            <person name="Winant A."/>
            <person name="Yelton M.A."/>
            <person name="Botstein D."/>
            <person name="Davis R.W."/>
            <person name="Johnston M."/>
            <person name="Andrews S."/>
            <person name="Brinkman R."/>
            <person name="Cooper J."/>
            <person name="Ding H."/>
            <person name="Du Z."/>
            <person name="Favello A."/>
            <person name="Fulton L."/>
            <person name="Gattung S."/>
            <person name="Greco T."/>
            <person name="Hallsworth K."/>
            <person name="Hawkins J."/>
            <person name="Hillier L.W."/>
            <person name="Jier M."/>
            <person name="Johnson D."/>
            <person name="Johnston L."/>
            <person name="Kirsten J."/>
            <person name="Kucaba T."/>
            <person name="Langston Y."/>
            <person name="Latreille P."/>
            <person name="Le T."/>
            <person name="Mardis E."/>
            <person name="Menezes S."/>
            <person name="Miller N."/>
            <person name="Nhan M."/>
            <person name="Pauley A."/>
            <person name="Peluso D."/>
            <person name="Rifkin L."/>
            <person name="Riles L."/>
            <person name="Taich A."/>
            <person name="Trevaskis E."/>
            <person name="Vignati D."/>
            <person name="Wilcox L."/>
            <person name="Wohldman P."/>
            <person name="Vaudin M."/>
            <person name="Wilson R."/>
            <person name="Waterston R."/>
            <person name="Albermann K."/>
            <person name="Hani J."/>
            <person name="Heumann K."/>
            <person name="Kleine K."/>
            <person name="Mewes H.-W."/>
            <person name="Zollner A."/>
            <person name="Zaccaria P."/>
        </authorList>
    </citation>
    <scope>NUCLEOTIDE SEQUENCE [LARGE SCALE GENOMIC DNA]</scope>
    <source>
        <strain>ATCC 204508 / S288c</strain>
    </source>
</reference>
<reference key="2">
    <citation type="journal article" date="2014" name="G3 (Bethesda)">
        <title>The reference genome sequence of Saccharomyces cerevisiae: Then and now.</title>
        <authorList>
            <person name="Engel S.R."/>
            <person name="Dietrich F.S."/>
            <person name="Fisk D.G."/>
            <person name="Binkley G."/>
            <person name="Balakrishnan R."/>
            <person name="Costanzo M.C."/>
            <person name="Dwight S.S."/>
            <person name="Hitz B.C."/>
            <person name="Karra K."/>
            <person name="Nash R.S."/>
            <person name="Weng S."/>
            <person name="Wong E.D."/>
            <person name="Lloyd P."/>
            <person name="Skrzypek M.S."/>
            <person name="Miyasato S.R."/>
            <person name="Simison M."/>
            <person name="Cherry J.M."/>
        </authorList>
    </citation>
    <scope>GENOME REANNOTATION</scope>
    <source>
        <strain>ATCC 204508 / S288c</strain>
    </source>
</reference>
<comment type="subcellular location">
    <subcellularLocation>
        <location evidence="2">Membrane</location>
        <topology evidence="2">Multi-pass membrane protein</topology>
    </subcellularLocation>
</comment>
<comment type="miscellaneous">
    <text evidence="2">Partially overlaps SYF1.</text>
</comment>
<comment type="caution">
    <text evidence="3">Product of a dubious gene prediction unlikely to encode a functional protein. Because of that it is not part of the S.cerevisiae S288c complete/reference proteome set.</text>
</comment>
<name>YD417_YEAST</name>
<accession>P87267</accession>
<organism>
    <name type="scientific">Saccharomyces cerevisiae (strain ATCC 204508 / S288c)</name>
    <name type="common">Baker's yeast</name>
    <dbReference type="NCBI Taxonomy" id="559292"/>
    <lineage>
        <taxon>Eukaryota</taxon>
        <taxon>Fungi</taxon>
        <taxon>Dikarya</taxon>
        <taxon>Ascomycota</taxon>
        <taxon>Saccharomycotina</taxon>
        <taxon>Saccharomycetes</taxon>
        <taxon>Saccharomycetales</taxon>
        <taxon>Saccharomycetaceae</taxon>
        <taxon>Saccharomyces</taxon>
    </lineage>
</organism>
<keyword id="KW-0472">Membrane</keyword>
<keyword id="KW-0732">Signal</keyword>
<keyword id="KW-0812">Transmembrane</keyword>
<keyword id="KW-1133">Transmembrane helix</keyword>
<protein>
    <recommendedName>
        <fullName>Putative uncharacterized protein YDR417C</fullName>
    </recommendedName>
</protein>
<dbReference type="EMBL" id="U33007">
    <property type="protein sequence ID" value="AAB64893.1"/>
    <property type="molecule type" value="Genomic_DNA"/>
</dbReference>
<dbReference type="PIR" id="S69736">
    <property type="entry name" value="S69736"/>
</dbReference>
<dbReference type="STRING" id="4932.YDR417C"/>
<dbReference type="PaxDb" id="4932-YDR417C"/>
<dbReference type="EnsemblFungi" id="YDR417C_mRNA">
    <property type="protein sequence ID" value="YDR417C"/>
    <property type="gene ID" value="YDR417C"/>
</dbReference>
<dbReference type="AGR" id="SGD:S000002825"/>
<dbReference type="SGD" id="S000002825">
    <property type="gene designation" value="YDR417C"/>
</dbReference>
<dbReference type="eggNOG" id="ENOG502SBUV">
    <property type="taxonomic scope" value="Eukaryota"/>
</dbReference>
<dbReference type="GeneTree" id="ENSGT00940000176684"/>
<dbReference type="HOGENOM" id="CLU_2110367_0_0_1"/>
<dbReference type="BRENDA" id="1.1.1.85">
    <property type="organism ID" value="984"/>
</dbReference>
<dbReference type="GO" id="GO:0016020">
    <property type="term" value="C:membrane"/>
    <property type="evidence" value="ECO:0007669"/>
    <property type="project" value="UniProtKB-SubCell"/>
</dbReference>
<sequence length="123" mass="13086">MLPLCLTFLSFFLSLGGSFKAVMTKEEADGTTEAAACLFWIFNWTVTLIPLNSLVALAISSPTFFGDKPNGPIFGAKAAEAPTSPPTALKYKYLTSFGSNFGGILTIDLSFYWALGVALTGSK</sequence>
<gene>
    <name type="ordered locus">YDR417C</name>
</gene>
<evidence type="ECO:0000255" key="1"/>
<evidence type="ECO:0000305" key="2"/>
<evidence type="ECO:0000305" key="3">
    <source>
    </source>
</evidence>
<feature type="signal peptide" evidence="1">
    <location>
        <begin position="1"/>
        <end position="24"/>
    </location>
</feature>
<feature type="chain" id="PRO_0000299750" description="Putative uncharacterized protein YDR417C">
    <location>
        <begin position="25"/>
        <end position="123"/>
    </location>
</feature>
<feature type="transmembrane region" description="Helical" evidence="1">
    <location>
        <begin position="39"/>
        <end position="59"/>
    </location>
</feature>
<feature type="transmembrane region" description="Helical" evidence="1">
    <location>
        <begin position="101"/>
        <end position="121"/>
    </location>
</feature>